<geneLocation type="chloroplast"/>
<proteinExistence type="evidence at protein level"/>
<feature type="chain" id="PRO_0000240021" description="NAD(P)H-quinone oxidoreductase subunit 1, chloroplastic">
    <location>
        <begin position="1"/>
        <end position="362"/>
    </location>
</feature>
<feature type="transmembrane region" description="Helical" evidence="1">
    <location>
        <begin position="29"/>
        <end position="49"/>
    </location>
</feature>
<feature type="transmembrane region" description="Helical" evidence="1">
    <location>
        <begin position="103"/>
        <end position="123"/>
    </location>
</feature>
<feature type="transmembrane region" description="Helical" evidence="1">
    <location>
        <begin position="128"/>
        <end position="148"/>
    </location>
</feature>
<feature type="transmembrane region" description="Helical" evidence="1">
    <location>
        <begin position="164"/>
        <end position="184"/>
    </location>
</feature>
<feature type="transmembrane region" description="Helical" evidence="1">
    <location>
        <begin position="202"/>
        <end position="222"/>
    </location>
</feature>
<feature type="transmembrane region" description="Helical" evidence="1">
    <location>
        <begin position="247"/>
        <end position="267"/>
    </location>
</feature>
<feature type="transmembrane region" description="Helical" evidence="1">
    <location>
        <begin position="303"/>
        <end position="323"/>
    </location>
</feature>
<feature type="transmembrane region" description="Helical" evidence="1">
    <location>
        <begin position="342"/>
        <end position="362"/>
    </location>
</feature>
<reference key="1">
    <citation type="journal article" date="2000" name="Nucleic Acids Res.">
        <title>Transcripts of the ndhH-D operon of barley plastids: possible role of unedited site III in splicing of the ndhA intron.</title>
        <authorList>
            <person name="del Campo E.M."/>
            <person name="Sabater B."/>
            <person name="Martin M."/>
        </authorList>
    </citation>
    <scope>NUCLEOTIDE SEQUENCE [GENOMIC DNA]</scope>
    <scope>RNA EDITING</scope>
    <source>
        <strain>cv. Hassan</strain>
        <tissue>Leaf</tissue>
    </source>
</reference>
<reference key="2">
    <citation type="journal article" date="2007" name="Theor. Appl. Genet.">
        <title>Complete chloroplast genome sequences of Hordeum vulgare, Sorghum bicolor and Agrostis stolonifera, and comparative analyses with other grass genomes.</title>
        <authorList>
            <person name="Saski C."/>
            <person name="Lee S.-B."/>
            <person name="Fjellheim S."/>
            <person name="Guda C."/>
            <person name="Jansen R.K."/>
            <person name="Luo H."/>
            <person name="Tomkins J."/>
            <person name="Rognli O.A."/>
            <person name="Daniell H."/>
            <person name="Clarke J.L."/>
        </authorList>
    </citation>
    <scope>NUCLEOTIDE SEQUENCE [LARGE SCALE GENOMIC DNA]</scope>
    <source>
        <strain>cv. Morex</strain>
    </source>
</reference>
<sequence>MIIDRVEVETINSFSKLELLKEVYGLISILPILTLLLGITIEVLVIVWLEREISASIQQRIGPEYAGPLGLLQAIADGTKLLFKEDILPSRGDISLFSIGPSIAVISVLLSFLVIPLGYHFVLADLSIGVFLWIAISSIAPIGLLMAGYSSNNKYSFLGGLRAAAQSISYEIPLTFCVLAISLLSNSLSTVDIVEAQSKYGFFGWNIWRQPIGFLVFLISSLAECERLPFDLPEAEEELVAGYQTEYSGIKYGLFYLVSYLNLLVSSLFVTVLYLGGWNFSIPYISFFDFFQMNKAVGILEMTMGIFITLTKAYLFLFISITIRWTLPRMRMDQLLNLGWKFLLPISLGNLLLTTSFQLVSL</sequence>
<gene>
    <name evidence="1" type="primary">ndhA</name>
</gene>
<evidence type="ECO:0000255" key="1">
    <source>
        <dbReference type="HAMAP-Rule" id="MF_01350"/>
    </source>
</evidence>
<evidence type="ECO:0000269" key="2">
    <source>
    </source>
</evidence>
<comment type="function">
    <text evidence="1">NDH shuttles electrons from NAD(P)H:plastoquinone, via FMN and iron-sulfur (Fe-S) centers, to quinones in the photosynthetic chain and possibly in a chloroplast respiratory chain. The immediate electron acceptor for the enzyme in this species is believed to be plastoquinone. Couples the redox reaction to proton translocation, and thus conserves the redox energy in a proton gradient.</text>
</comment>
<comment type="catalytic activity">
    <reaction evidence="1">
        <text>a plastoquinone + NADH + (n+1) H(+)(in) = a plastoquinol + NAD(+) + n H(+)(out)</text>
        <dbReference type="Rhea" id="RHEA:42608"/>
        <dbReference type="Rhea" id="RHEA-COMP:9561"/>
        <dbReference type="Rhea" id="RHEA-COMP:9562"/>
        <dbReference type="ChEBI" id="CHEBI:15378"/>
        <dbReference type="ChEBI" id="CHEBI:17757"/>
        <dbReference type="ChEBI" id="CHEBI:57540"/>
        <dbReference type="ChEBI" id="CHEBI:57945"/>
        <dbReference type="ChEBI" id="CHEBI:62192"/>
    </reaction>
</comment>
<comment type="catalytic activity">
    <reaction evidence="1">
        <text>a plastoquinone + NADPH + (n+1) H(+)(in) = a plastoquinol + NADP(+) + n H(+)(out)</text>
        <dbReference type="Rhea" id="RHEA:42612"/>
        <dbReference type="Rhea" id="RHEA-COMP:9561"/>
        <dbReference type="Rhea" id="RHEA-COMP:9562"/>
        <dbReference type="ChEBI" id="CHEBI:15378"/>
        <dbReference type="ChEBI" id="CHEBI:17757"/>
        <dbReference type="ChEBI" id="CHEBI:57783"/>
        <dbReference type="ChEBI" id="CHEBI:58349"/>
        <dbReference type="ChEBI" id="CHEBI:62192"/>
    </reaction>
</comment>
<comment type="subunit">
    <text evidence="1">NDH is composed of at least 16 different subunits, 5 of which are encoded in the nucleus.</text>
</comment>
<comment type="subcellular location">
    <subcellularLocation>
        <location evidence="1">Plastid</location>
        <location evidence="1">Chloroplast thylakoid membrane</location>
        <topology evidence="1">Multi-pass membrane protein</topology>
    </subcellularLocation>
</comment>
<comment type="RNA editing">
    <location>
        <position position="17" evidence="2"/>
    </location>
    <location>
        <position position="158" evidence="2"/>
    </location>
    <location>
        <position position="188" evidence="2"/>
    </location>
    <location>
        <position position="357" evidence="2"/>
    </location>
</comment>
<comment type="similarity">
    <text evidence="1">Belongs to the complex I subunit 1 family.</text>
</comment>
<name>NU1C_HORVU</name>
<keyword id="KW-0002">3D-structure</keyword>
<keyword id="KW-0150">Chloroplast</keyword>
<keyword id="KW-0472">Membrane</keyword>
<keyword id="KW-0520">NAD</keyword>
<keyword id="KW-0521">NADP</keyword>
<keyword id="KW-0934">Plastid</keyword>
<keyword id="KW-0618">Plastoquinone</keyword>
<keyword id="KW-0874">Quinone</keyword>
<keyword id="KW-0691">RNA editing</keyword>
<keyword id="KW-0793">Thylakoid</keyword>
<keyword id="KW-1278">Translocase</keyword>
<keyword id="KW-0812">Transmembrane</keyword>
<keyword id="KW-1133">Transmembrane helix</keyword>
<protein>
    <recommendedName>
        <fullName evidence="1">NAD(P)H-quinone oxidoreductase subunit 1, chloroplastic</fullName>
        <ecNumber evidence="1">7.1.1.-</ecNumber>
    </recommendedName>
    <alternativeName>
        <fullName evidence="1">NAD(P)H dehydrogenase subunit 1</fullName>
        <shortName evidence="1">NDH subunit 1</shortName>
    </alternativeName>
    <alternativeName>
        <fullName evidence="1">NADH-plastoquinone oxidoreductase subunit 1</fullName>
    </alternativeName>
</protein>
<organism>
    <name type="scientific">Hordeum vulgare</name>
    <name type="common">Barley</name>
    <dbReference type="NCBI Taxonomy" id="4513"/>
    <lineage>
        <taxon>Eukaryota</taxon>
        <taxon>Viridiplantae</taxon>
        <taxon>Streptophyta</taxon>
        <taxon>Embryophyta</taxon>
        <taxon>Tracheophyta</taxon>
        <taxon>Spermatophyta</taxon>
        <taxon>Magnoliopsida</taxon>
        <taxon>Liliopsida</taxon>
        <taxon>Poales</taxon>
        <taxon>Poaceae</taxon>
        <taxon>BOP clade</taxon>
        <taxon>Pooideae</taxon>
        <taxon>Triticodae</taxon>
        <taxon>Triticeae</taxon>
        <taxon>Hordeinae</taxon>
        <taxon>Hordeum</taxon>
    </lineage>
</organism>
<accession>P92432</accession>
<accession>A1E9P5</accession>
<accession>O20233</accession>
<dbReference type="EC" id="7.1.1.-" evidence="1"/>
<dbReference type="EMBL" id="AJ011848">
    <property type="protein sequence ID" value="CAA09812.1"/>
    <property type="status" value="ALT_SEQ"/>
    <property type="molecule type" value="Genomic_DNA"/>
</dbReference>
<dbReference type="EMBL" id="EF115541">
    <property type="protein sequence ID" value="ABK79467.1"/>
    <property type="status" value="ALT_SEQ"/>
    <property type="molecule type" value="Genomic_DNA"/>
</dbReference>
<dbReference type="PDB" id="7EU3">
    <property type="method" value="EM"/>
    <property type="resolution" value="3.70 A"/>
    <property type="chains" value="A=15-360"/>
</dbReference>
<dbReference type="PDB" id="7F9O">
    <property type="method" value="EM"/>
    <property type="resolution" value="4.50 A"/>
    <property type="chains" value="G=15-360"/>
</dbReference>
<dbReference type="PDBsum" id="7EU3"/>
<dbReference type="PDBsum" id="7F9O"/>
<dbReference type="EMDB" id="EMD-31307"/>
<dbReference type="EMDB" id="EMD-31498"/>
<dbReference type="SMR" id="P92432"/>
<dbReference type="GO" id="GO:0009535">
    <property type="term" value="C:chloroplast thylakoid membrane"/>
    <property type="evidence" value="ECO:0007669"/>
    <property type="project" value="UniProtKB-SubCell"/>
</dbReference>
<dbReference type="GO" id="GO:0003954">
    <property type="term" value="F:NADH dehydrogenase activity"/>
    <property type="evidence" value="ECO:0007669"/>
    <property type="project" value="TreeGrafter"/>
</dbReference>
<dbReference type="GO" id="GO:0016655">
    <property type="term" value="F:oxidoreductase activity, acting on NAD(P)H, quinone or similar compound as acceptor"/>
    <property type="evidence" value="ECO:0007669"/>
    <property type="project" value="UniProtKB-UniRule"/>
</dbReference>
<dbReference type="GO" id="GO:0048038">
    <property type="term" value="F:quinone binding"/>
    <property type="evidence" value="ECO:0007669"/>
    <property type="project" value="UniProtKB-KW"/>
</dbReference>
<dbReference type="GO" id="GO:0009060">
    <property type="term" value="P:aerobic respiration"/>
    <property type="evidence" value="ECO:0007669"/>
    <property type="project" value="TreeGrafter"/>
</dbReference>
<dbReference type="GO" id="GO:0019684">
    <property type="term" value="P:photosynthesis, light reaction"/>
    <property type="evidence" value="ECO:0007669"/>
    <property type="project" value="UniProtKB-UniRule"/>
</dbReference>
<dbReference type="HAMAP" id="MF_01350">
    <property type="entry name" value="NDH1_NuoH"/>
    <property type="match status" value="1"/>
</dbReference>
<dbReference type="InterPro" id="IPR001694">
    <property type="entry name" value="NADH_UbQ_OxRdtase_su1/FPO"/>
</dbReference>
<dbReference type="InterPro" id="IPR018086">
    <property type="entry name" value="NADH_UbQ_OxRdtase_su1_CS"/>
</dbReference>
<dbReference type="NCBIfam" id="NF004741">
    <property type="entry name" value="PRK06076.1-2"/>
    <property type="match status" value="1"/>
</dbReference>
<dbReference type="PANTHER" id="PTHR11432">
    <property type="entry name" value="NADH DEHYDROGENASE SUBUNIT 1"/>
    <property type="match status" value="1"/>
</dbReference>
<dbReference type="PANTHER" id="PTHR11432:SF3">
    <property type="entry name" value="NADH-UBIQUINONE OXIDOREDUCTASE CHAIN 1"/>
    <property type="match status" value="1"/>
</dbReference>
<dbReference type="Pfam" id="PF00146">
    <property type="entry name" value="NADHdh"/>
    <property type="match status" value="1"/>
</dbReference>
<dbReference type="PROSITE" id="PS00667">
    <property type="entry name" value="COMPLEX1_ND1_1"/>
    <property type="match status" value="1"/>
</dbReference>
<dbReference type="PROSITE" id="PS00668">
    <property type="entry name" value="COMPLEX1_ND1_2"/>
    <property type="match status" value="1"/>
</dbReference>